<proteinExistence type="evidence at protein level"/>
<comment type="function">
    <text>Inhibitor of cathepsin D (aspartic protease) and trypsin (serine protease). May protect the plant by inhibiting proteases of invading organisms.</text>
</comment>
<comment type="subcellular location">
    <subcellularLocation>
        <location evidence="1">Vacuole</location>
    </subcellularLocation>
</comment>
<comment type="allergen">
    <text>Causes an allergic reaction in human.</text>
</comment>
<comment type="similarity">
    <text evidence="5">Belongs to the protease inhibitor I3 (leguminous Kunitz-type inhibitor) family.</text>
</comment>
<name>API11_SOLTU</name>
<reference key="1">
    <citation type="journal article" date="1989" name="FEBS Lett.">
        <title>Primary structure of cathepsin D inhibitor from potatoes and its structure relationship to soybean trypsin inhibitor family.</title>
        <authorList>
            <person name="Mares M."/>
            <person name="Meloun B."/>
            <person name="Pavlik M."/>
            <person name="Kostka V."/>
            <person name="Baudys M."/>
        </authorList>
    </citation>
    <scope>PROTEIN SEQUENCE</scope>
</reference>
<reference key="2">
    <citation type="journal article" date="2015" name="J. Struct. Biol.">
        <title>Structure of a Kunitz-type potato cathepsin D inhibitor.</title>
        <authorList>
            <person name="Guo J."/>
            <person name="Erskine P.T."/>
            <person name="Coker A.R."/>
            <person name="Wood S.P."/>
            <person name="Cooper J.B."/>
        </authorList>
    </citation>
    <scope>X-RAY CRYSTALLOGRAPHY (2.12 ANGSTROMS)</scope>
    <scope>GLYCOSYLATION AT ASN-19</scope>
    <scope>DISULFIDE BONDS</scope>
</reference>
<feature type="chain" id="PRO_0000083313" description="Aspartic protease inhibitor 11">
    <location>
        <begin position="1"/>
        <end position="188"/>
    </location>
</feature>
<feature type="site" description="Reactive bond for trypsin">
    <location>
        <begin position="67"/>
        <end position="68"/>
    </location>
</feature>
<feature type="site" description="Reactive bond for chymotrypsin" evidence="1">
    <location>
        <begin position="111"/>
        <end position="112"/>
    </location>
</feature>
<feature type="glycosylation site" description="N-linked (GlcNAc...) asparagine" evidence="2 3 4 6">
    <location>
        <position position="19"/>
    </location>
</feature>
<feature type="disulfide bond" evidence="3 6">
    <location>
        <begin position="48"/>
        <end position="93"/>
    </location>
</feature>
<feature type="disulfide bond" evidence="3 6">
    <location>
        <begin position="142"/>
        <end position="159"/>
    </location>
</feature>
<feature type="disulfide bond" evidence="3 6">
    <location>
        <begin position="150"/>
        <end position="153"/>
    </location>
</feature>
<feature type="strand" evidence="7">
    <location>
        <begin position="20"/>
        <end position="25"/>
    </location>
</feature>
<feature type="strand" evidence="7">
    <location>
        <begin position="36"/>
        <end position="39"/>
    </location>
</feature>
<feature type="strand" evidence="7">
    <location>
        <begin position="51"/>
        <end position="54"/>
    </location>
</feature>
<feature type="strand" evidence="7">
    <location>
        <begin position="66"/>
        <end position="74"/>
    </location>
</feature>
<feature type="strand" evidence="7">
    <location>
        <begin position="81"/>
        <end position="85"/>
    </location>
</feature>
<feature type="helix" evidence="7">
    <location>
        <begin position="91"/>
        <end position="97"/>
    </location>
</feature>
<feature type="strand" evidence="7">
    <location>
        <begin position="98"/>
        <end position="101"/>
    </location>
</feature>
<feature type="turn" evidence="7">
    <location>
        <begin position="106"/>
        <end position="109"/>
    </location>
</feature>
<feature type="strand" evidence="7">
    <location>
        <begin position="112"/>
        <end position="115"/>
    </location>
</feature>
<feature type="strand" evidence="7">
    <location>
        <begin position="119"/>
        <end position="121"/>
    </location>
</feature>
<feature type="strand" evidence="7">
    <location>
        <begin position="127"/>
        <end position="130"/>
    </location>
</feature>
<feature type="strand" evidence="7">
    <location>
        <begin position="133"/>
        <end position="141"/>
    </location>
</feature>
<feature type="turn" evidence="7">
    <location>
        <begin position="155"/>
        <end position="157"/>
    </location>
</feature>
<feature type="strand" evidence="7">
    <location>
        <begin position="160"/>
        <end position="167"/>
    </location>
</feature>
<feature type="strand" evidence="7">
    <location>
        <begin position="170"/>
        <end position="178"/>
    </location>
</feature>
<feature type="strand" evidence="7">
    <location>
        <begin position="183"/>
        <end position="188"/>
    </location>
</feature>
<protein>
    <recommendedName>
        <fullName>Aspartic protease inhibitor 11</fullName>
    </recommendedName>
    <alternativeName>
        <fullName>Cathepsin D inhibitor PDI</fullName>
    </alternativeName>
    <allergenName>Sola t 2</allergenName>
</protein>
<dbReference type="PIR" id="S05025">
    <property type="entry name" value="XKPODC"/>
</dbReference>
<dbReference type="PDB" id="5DZU">
    <property type="method" value="X-ray"/>
    <property type="resolution" value="2.12 A"/>
    <property type="chains" value="A/B=1-188"/>
</dbReference>
<dbReference type="PDBsum" id="5DZU"/>
<dbReference type="SMR" id="P16348"/>
<dbReference type="STRING" id="4113.P16348"/>
<dbReference type="Allergome" id="3491">
    <property type="allergen name" value="Sola t 2.0101"/>
</dbReference>
<dbReference type="Allergome" id="640">
    <property type="allergen name" value="Sola t 2"/>
</dbReference>
<dbReference type="iPTMnet" id="P16348"/>
<dbReference type="InParanoid" id="P16348"/>
<dbReference type="EvolutionaryTrace" id="P16348"/>
<dbReference type="Proteomes" id="UP000011115">
    <property type="component" value="Unassembled WGS sequence"/>
</dbReference>
<dbReference type="ExpressionAtlas" id="P16348">
    <property type="expression patterns" value="baseline and differential"/>
</dbReference>
<dbReference type="GO" id="GO:0005773">
    <property type="term" value="C:vacuole"/>
    <property type="evidence" value="ECO:0007669"/>
    <property type="project" value="UniProtKB-SubCell"/>
</dbReference>
<dbReference type="GO" id="GO:0019828">
    <property type="term" value="F:aspartic-type endopeptidase inhibitor activity"/>
    <property type="evidence" value="ECO:0007669"/>
    <property type="project" value="UniProtKB-KW"/>
</dbReference>
<dbReference type="GO" id="GO:0004867">
    <property type="term" value="F:serine-type endopeptidase inhibitor activity"/>
    <property type="evidence" value="ECO:0007669"/>
    <property type="project" value="UniProtKB-KW"/>
</dbReference>
<dbReference type="CDD" id="cd23372">
    <property type="entry name" value="beta-trefoil_STI_CPI-like"/>
    <property type="match status" value="1"/>
</dbReference>
<dbReference type="Gene3D" id="2.80.10.50">
    <property type="match status" value="1"/>
</dbReference>
<dbReference type="InterPro" id="IPR011065">
    <property type="entry name" value="Kunitz_inhibitor_STI-like_sf"/>
</dbReference>
<dbReference type="InterPro" id="IPR002160">
    <property type="entry name" value="Prot_inh_Kunz-lg"/>
</dbReference>
<dbReference type="PANTHER" id="PTHR33107">
    <property type="entry name" value="KUNITZ TRYPSIN INHIBITOR 2"/>
    <property type="match status" value="1"/>
</dbReference>
<dbReference type="PANTHER" id="PTHR33107:SF38">
    <property type="entry name" value="SERINE PROTEASE INHIBITOR 5"/>
    <property type="match status" value="1"/>
</dbReference>
<dbReference type="Pfam" id="PF00197">
    <property type="entry name" value="Kunitz_legume"/>
    <property type="match status" value="1"/>
</dbReference>
<dbReference type="PRINTS" id="PR00291">
    <property type="entry name" value="KUNITZINHBTR"/>
</dbReference>
<dbReference type="SMART" id="SM00452">
    <property type="entry name" value="STI"/>
    <property type="match status" value="1"/>
</dbReference>
<dbReference type="SUPFAM" id="SSF50386">
    <property type="entry name" value="STI-like"/>
    <property type="match status" value="1"/>
</dbReference>
<dbReference type="PROSITE" id="PS00283">
    <property type="entry name" value="SOYBEAN_KUNITZ"/>
    <property type="match status" value="1"/>
</dbReference>
<keyword id="KW-0002">3D-structure</keyword>
<keyword id="KW-0020">Allergen</keyword>
<keyword id="KW-0062">Aspartic protease inhibitor</keyword>
<keyword id="KW-0903">Direct protein sequencing</keyword>
<keyword id="KW-1015">Disulfide bond</keyword>
<keyword id="KW-0325">Glycoprotein</keyword>
<keyword id="KW-0646">Protease inhibitor</keyword>
<keyword id="KW-1185">Reference proteome</keyword>
<keyword id="KW-0722">Serine protease inhibitor</keyword>
<keyword id="KW-0926">Vacuole</keyword>
<evidence type="ECO:0000250" key="1"/>
<evidence type="ECO:0000255" key="2">
    <source>
        <dbReference type="PROSITE-ProRule" id="PRU00498"/>
    </source>
</evidence>
<evidence type="ECO:0000269" key="3">
    <source>
    </source>
</evidence>
<evidence type="ECO:0000269" key="4">
    <source>
    </source>
</evidence>
<evidence type="ECO:0000305" key="5"/>
<evidence type="ECO:0007744" key="6">
    <source>
        <dbReference type="PDB" id="5DZU"/>
    </source>
</evidence>
<evidence type="ECO:0007829" key="7">
    <source>
        <dbReference type="PDB" id="5DZU"/>
    </source>
</evidence>
<sequence length="188" mass="20590">ESPLPKPVLDTNGKELNPNSSYRIISIGRGALGGDVYLGKSPNSDAPCPDGVFRYNSDVGPSGTPVRFIPLSGGIFEDQLLNIQFNIATVKLCVSYTIWKVGNLNAYFRTMLLETGGTIGQADSSYFKIVKLSNFGYNLLYCPITPPFLCPFCRDDNFCAKVGVVIQNGKRRLALVNENPLDVLFQEV</sequence>
<organism>
    <name type="scientific">Solanum tuberosum</name>
    <name type="common">Potato</name>
    <dbReference type="NCBI Taxonomy" id="4113"/>
    <lineage>
        <taxon>Eukaryota</taxon>
        <taxon>Viridiplantae</taxon>
        <taxon>Streptophyta</taxon>
        <taxon>Embryophyta</taxon>
        <taxon>Tracheophyta</taxon>
        <taxon>Spermatophyta</taxon>
        <taxon>Magnoliopsida</taxon>
        <taxon>eudicotyledons</taxon>
        <taxon>Gunneridae</taxon>
        <taxon>Pentapetalae</taxon>
        <taxon>asterids</taxon>
        <taxon>lamiids</taxon>
        <taxon>Solanales</taxon>
        <taxon>Solanaceae</taxon>
        <taxon>Solanoideae</taxon>
        <taxon>Solaneae</taxon>
        <taxon>Solanum</taxon>
    </lineage>
</organism>
<accession>P16348</accession>